<feature type="chain" id="PRO_0000445446" description="Fusicoccadiene 8-ol C-16-hydroxylase">
    <location>
        <begin position="1"/>
        <end position="526"/>
    </location>
</feature>
<feature type="transmembrane region" description="Helical" evidence="2">
    <location>
        <begin position="34"/>
        <end position="56"/>
    </location>
</feature>
<feature type="binding site" description="axial binding residue" evidence="1">
    <location>
        <position position="470"/>
    </location>
    <ligand>
        <name>heme</name>
        <dbReference type="ChEBI" id="CHEBI:30413"/>
    </ligand>
    <ligandPart>
        <name>Fe</name>
        <dbReference type="ChEBI" id="CHEBI:18248"/>
    </ligandPart>
</feature>
<feature type="glycosylation site" description="N-linked (GlcNAc...) asparagine" evidence="3">
    <location>
        <position position="309"/>
    </location>
</feature>
<feature type="glycosylation site" description="N-linked (GlcNAc...) asparagine" evidence="3">
    <location>
        <position position="418"/>
    </location>
</feature>
<feature type="glycosylation site" description="N-linked (GlcNAc...) asparagine" evidence="3">
    <location>
        <position position="434"/>
    </location>
</feature>
<dbReference type="EC" id="1.1.1.-" evidence="7"/>
<dbReference type="EMBL" id="AB686270">
    <property type="protein sequence ID" value="BAM71029.1"/>
    <property type="molecule type" value="mRNA"/>
</dbReference>
<dbReference type="SMR" id="L0MXJ1"/>
<dbReference type="GlyCosmos" id="L0MXJ1">
    <property type="glycosylation" value="3 sites, No reported glycans"/>
</dbReference>
<dbReference type="GO" id="GO:0016020">
    <property type="term" value="C:membrane"/>
    <property type="evidence" value="ECO:0007669"/>
    <property type="project" value="UniProtKB-SubCell"/>
</dbReference>
<dbReference type="GO" id="GO:0020037">
    <property type="term" value="F:heme binding"/>
    <property type="evidence" value="ECO:0007669"/>
    <property type="project" value="InterPro"/>
</dbReference>
<dbReference type="GO" id="GO:0005506">
    <property type="term" value="F:iron ion binding"/>
    <property type="evidence" value="ECO:0007669"/>
    <property type="project" value="InterPro"/>
</dbReference>
<dbReference type="GO" id="GO:0004497">
    <property type="term" value="F:monooxygenase activity"/>
    <property type="evidence" value="ECO:0007669"/>
    <property type="project" value="UniProtKB-KW"/>
</dbReference>
<dbReference type="GO" id="GO:0016705">
    <property type="term" value="F:oxidoreductase activity, acting on paired donors, with incorporation or reduction of molecular oxygen"/>
    <property type="evidence" value="ECO:0007669"/>
    <property type="project" value="InterPro"/>
</dbReference>
<dbReference type="CDD" id="cd11058">
    <property type="entry name" value="CYP60B-like"/>
    <property type="match status" value="1"/>
</dbReference>
<dbReference type="Gene3D" id="1.10.630.10">
    <property type="entry name" value="Cytochrome P450"/>
    <property type="match status" value="1"/>
</dbReference>
<dbReference type="InterPro" id="IPR001128">
    <property type="entry name" value="Cyt_P450"/>
</dbReference>
<dbReference type="InterPro" id="IPR002401">
    <property type="entry name" value="Cyt_P450_E_grp-I"/>
</dbReference>
<dbReference type="InterPro" id="IPR036396">
    <property type="entry name" value="Cyt_P450_sf"/>
</dbReference>
<dbReference type="InterPro" id="IPR050121">
    <property type="entry name" value="Cytochrome_P450_monoxygenase"/>
</dbReference>
<dbReference type="PANTHER" id="PTHR24305">
    <property type="entry name" value="CYTOCHROME P450"/>
    <property type="match status" value="1"/>
</dbReference>
<dbReference type="PANTHER" id="PTHR24305:SF230">
    <property type="entry name" value="P450, PUTATIVE (EUROFUNG)-RELATED"/>
    <property type="match status" value="1"/>
</dbReference>
<dbReference type="Pfam" id="PF00067">
    <property type="entry name" value="p450"/>
    <property type="match status" value="1"/>
</dbReference>
<dbReference type="PRINTS" id="PR00463">
    <property type="entry name" value="EP450I"/>
</dbReference>
<dbReference type="PRINTS" id="PR00385">
    <property type="entry name" value="P450"/>
</dbReference>
<dbReference type="SUPFAM" id="SSF48264">
    <property type="entry name" value="Cytochrome P450"/>
    <property type="match status" value="1"/>
</dbReference>
<name>FC3_PHOAM</name>
<evidence type="ECO:0000250" key="1">
    <source>
        <dbReference type="UniProtKB" id="P04798"/>
    </source>
</evidence>
<evidence type="ECO:0000255" key="2"/>
<evidence type="ECO:0000255" key="3">
    <source>
        <dbReference type="PROSITE-ProRule" id="PRU00498"/>
    </source>
</evidence>
<evidence type="ECO:0000269" key="4">
    <source>
    </source>
</evidence>
<evidence type="ECO:0000269" key="5">
    <source>
    </source>
</evidence>
<evidence type="ECO:0000269" key="6">
    <source>
    </source>
</evidence>
<evidence type="ECO:0000269" key="7">
    <source>
    </source>
</evidence>
<evidence type="ECO:0000303" key="8">
    <source>
    </source>
</evidence>
<evidence type="ECO:0000305" key="9"/>
<comment type="function">
    <text evidence="4 5 6 7">Cytochrome P450 monooxygenase; part of the 2 gene clusters that mediate the biosynthesis of fusicoccins, diterpene glucosides that display phytohormone-like activity and function as potent activators of plasma membrane H(+)-ATPases in plants by modifying 14-3-3 proteins and cause the plant disease constriction canker (PubMed:22870285). The first step in the pathway is performed by the fusicoccadiene synthase PaFS that possesses both prenyl transferase and terpene cyclase activity, converting isopentenyl diphosphate and dimethylallyl diphosphate into geranylgeranyl diphosphate (GGDP) and successively converting GGDP into fusicocca-2,10(14)-diene, a precursor for fusicoccin H (PubMed:17360612). The second step is the oxidation at the C-8 position by the cytochrome P450 monooxygenase PaP450-2 to yield fusicocca-2,10(14)-diene-8-beta-ol (PubMed:22870285). The cytochrome P450 monooxygenase PaP450-1 then catalyzes the hydroxylation at the C-16 position to produce fusicocca-2,10(14)-diene-8-beta,16-diol (PubMed:22870285). The dioxygenase fc-dox then catalyzes the 16-oxydation of fusicocca-2,10(14)-diene-8-beta,16-diol to yield an aldehyde (8-beta-hydroxyfusicocca-1,10(14)-dien-16-al) (PubMed:21299202, PubMed:22870285). The short-chain dehydrogenase/reductase fc-sdr catalyzes the reduction of the aldehyde to yield fusicocca-1,10(14)-diene-8-beta,16-diol (PubMed:21299202, PubMed:22870285). The next step is the hydroxylation at C-9 performed by the cytochrome P450 monooxygenase PaP450-3 that leads to fusicoccin H aglycon which is glycosylated to fusicoccin H by the O-glycosyltransferase PaGT (PubMed:22870285). Hydroxylation at C-12 by the cytochrome P450 monooxygenase PaP450-4 leads then to the production of fusicoccin Q and is followed by methylation by the O-methyltransferase PaMT to yield fusicoccin P (PubMed:22870285). Fusicoccin P is further converted to fusicoccin J via prenylation by the O-glucose prenyltransferase PaPT (PubMed:22287087). Cytochrome P450 monooxygenase PaP450-5 then performs hydroxylation at C-19 to yield dideacetyl-fusicoccin A which is acetylated to 3'-O-deacetyl-fusicoccin A by the O-acetyltransferase PaAT-2 (PubMed:22870285). Finally, a another acetylation by the O-acetyltransferase PaAT-1 yields fusicoccin A (PubMed:22870285).</text>
</comment>
<comment type="cofactor">
    <cofactor evidence="1">
        <name>heme</name>
        <dbReference type="ChEBI" id="CHEBI:30413"/>
    </cofactor>
</comment>
<comment type="pathway">
    <text evidence="7">Mycotoxin biosynthesis.</text>
</comment>
<comment type="subcellular location">
    <subcellularLocation>
        <location evidence="2">Membrane</location>
        <topology evidence="2">Single-pass membrane protein</topology>
    </subcellularLocation>
</comment>
<comment type="similarity">
    <text evidence="9">Belongs to the cytochrome P450 family.</text>
</comment>
<reference key="1">
    <citation type="journal article" date="2012" name="PLoS ONE">
        <title>Molecular breeding of a fungus producing a precursor diterpene suitable for semi-synthesis by dissection of the biosynthetic machinery.</title>
        <authorList>
            <person name="Noike M."/>
            <person name="Ono Y."/>
            <person name="Araki Y."/>
            <person name="Tanio R."/>
            <person name="Higuchi Y."/>
            <person name="Nitta H."/>
            <person name="Hamano Y."/>
            <person name="Toyomasu T."/>
            <person name="Sassa T."/>
            <person name="Kato N."/>
            <person name="Dairi T."/>
        </authorList>
    </citation>
    <scope>NUCLEOTIDE SEQUENCE [MRNA]</scope>
    <scope>FUNCTION</scope>
    <scope>CATALYTIC ACTIVITY</scope>
    <scope>PATHWAY</scope>
</reference>
<reference key="2">
    <citation type="journal article" date="2007" name="Proc. Natl. Acad. Sci. U.S.A.">
        <title>Fusicoccins are biosynthesized by an unusual chimera diterpene synthase in fungi.</title>
        <authorList>
            <person name="Toyomasu T."/>
            <person name="Tsukahara M."/>
            <person name="Kaneko A."/>
            <person name="Niida R."/>
            <person name="Mitsuhashi W."/>
            <person name="Dairi T."/>
            <person name="Kato N."/>
            <person name="Sassa T."/>
        </authorList>
    </citation>
    <scope>FUNCTION</scope>
</reference>
<reference key="3">
    <citation type="journal article" date="2011" name="J. Am. Chem. Soc.">
        <title>Dioxygenases, key enzymes to determine the aglycon structures of fusicoccin and brassicicene, diterpene compounds produced by fungi.</title>
        <authorList>
            <person name="Ono Y."/>
            <person name="Minami A."/>
            <person name="Noike M."/>
            <person name="Higuchi Y."/>
            <person name="Toyomasu T."/>
            <person name="Sassa T."/>
            <person name="Kato N."/>
            <person name="Dairi T."/>
        </authorList>
    </citation>
    <scope>FUNCTION</scope>
</reference>
<reference key="4">
    <citation type="journal article" date="2012" name="ChemBioChem">
        <title>An enzyme catalyzing O-prenylation of the glucose moiety of fusicoccin A, a diterpene glucoside produced by the fungus Phomopsis amygdali.</title>
        <authorList>
            <person name="Noike M."/>
            <person name="Liu C."/>
            <person name="Ono Y."/>
            <person name="Hamano Y."/>
            <person name="Toyomasu T."/>
            <person name="Sassa T."/>
            <person name="Kato N."/>
            <person name="Dairi T."/>
        </authorList>
    </citation>
    <scope>FUNCTION</scope>
</reference>
<keyword id="KW-0325">Glycoprotein</keyword>
<keyword id="KW-0349">Heme</keyword>
<keyword id="KW-0408">Iron</keyword>
<keyword id="KW-0472">Membrane</keyword>
<keyword id="KW-0479">Metal-binding</keyword>
<keyword id="KW-0503">Monooxygenase</keyword>
<keyword id="KW-0520">NAD</keyword>
<keyword id="KW-0560">Oxidoreductase</keyword>
<keyword id="KW-0812">Transmembrane</keyword>
<keyword id="KW-1133">Transmembrane helix</keyword>
<gene>
    <name evidence="8" type="primary">PaP450-1</name>
    <name evidence="8" type="synonym">orf3</name>
</gene>
<sequence>MIGVCGFQWSLSFSTMYTVSLPHGPFLGSRAQEAFVGFSVLGLTLLFSKLFYNAYLHPLRKFPGPLLARLSRLYYSYYRSTGQLEWKTLELHKKYGSVVRIAPNELSFNAGTAWDDIYGHTTKRRSGRRLQKEAFFYLGAVAPNGEKNLGASSDEDHSRIRGVLSSAFSEKAVFAQEDLLMRHIGFMVERIRSLNGIPTDAVRWLHHCTFDITTDLSLGASAKTLACDEWSPLAHLMFEGIKEGITAVEILRFAPFKYQAFSLLIKAFGKARLEAFQAAINQAHIRMAQATTDKEDKKPDFMSYIIKANKTSKALTPSEITANVALLLDVGSETTASLLAGCLFYLTKTPHILEKLTSMIRKDFQTPQEINSKNLAQNSYLTAVLNEALRIYPPVAGATPRVTPPEGSQIDGRYVPGNISVAVNQVAMNRSPKNFTNPDQFVPGRWLGDGCFPDDQLQLCQPFSHGPRACQGRNLAWAEMRLIMGHLLWNFDVELSSESENWNSQKTWFIWDKPDLMIRFKSREGQ</sequence>
<proteinExistence type="evidence at protein level"/>
<accession>L0MXJ1</accession>
<protein>
    <recommendedName>
        <fullName evidence="8">Fusicoccadiene 8-ol C-16-hydroxylase</fullName>
        <ecNumber evidence="7">1.1.1.-</ecNumber>
    </recommendedName>
    <alternativeName>
        <fullName evidence="8">Cytochrome P450 monooxygenase PaP450-1</fullName>
    </alternativeName>
    <alternativeName>
        <fullName evidence="8">Fusicoccin A biosynthetic gene clusters protein 3</fullName>
    </alternativeName>
</protein>
<organism>
    <name type="scientific">Phomopsis amygdali</name>
    <name type="common">Fusicoccum amygdali</name>
    <dbReference type="NCBI Taxonomy" id="1214568"/>
    <lineage>
        <taxon>Eukaryota</taxon>
        <taxon>Fungi</taxon>
        <taxon>Dikarya</taxon>
        <taxon>Ascomycota</taxon>
        <taxon>Pezizomycotina</taxon>
        <taxon>Sordariomycetes</taxon>
        <taxon>Sordariomycetidae</taxon>
        <taxon>Diaporthales</taxon>
        <taxon>Diaporthaceae</taxon>
        <taxon>Diaporthe</taxon>
    </lineage>
</organism>